<comment type="catalytic activity">
    <reaction evidence="1">
        <text>D-altronate + NAD(+) = keto-D-tagaturonate + NADH + H(+)</text>
        <dbReference type="Rhea" id="RHEA:17813"/>
        <dbReference type="ChEBI" id="CHEBI:15378"/>
        <dbReference type="ChEBI" id="CHEBI:17360"/>
        <dbReference type="ChEBI" id="CHEBI:17886"/>
        <dbReference type="ChEBI" id="CHEBI:57540"/>
        <dbReference type="ChEBI" id="CHEBI:57945"/>
        <dbReference type="EC" id="1.1.1.58"/>
    </reaction>
</comment>
<comment type="pathway">
    <text evidence="1">Carbohydrate metabolism; pentose and glucuronate interconversion.</text>
</comment>
<comment type="similarity">
    <text evidence="1">Belongs to the mannitol dehydrogenase family. UxaB subfamily.</text>
</comment>
<feature type="chain" id="PRO_1000131514" description="Altronate oxidoreductase">
    <location>
        <begin position="1"/>
        <end position="483"/>
    </location>
</feature>
<feature type="binding site" evidence="1">
    <location>
        <begin position="18"/>
        <end position="29"/>
    </location>
    <ligand>
        <name>NAD(+)</name>
        <dbReference type="ChEBI" id="CHEBI:57540"/>
    </ligand>
</feature>
<proteinExistence type="inferred from homology"/>
<organism>
    <name type="scientific">Klebsiella pneumoniae (strain 342)</name>
    <dbReference type="NCBI Taxonomy" id="507522"/>
    <lineage>
        <taxon>Bacteria</taxon>
        <taxon>Pseudomonadati</taxon>
        <taxon>Pseudomonadota</taxon>
        <taxon>Gammaproteobacteria</taxon>
        <taxon>Enterobacterales</taxon>
        <taxon>Enterobacteriaceae</taxon>
        <taxon>Klebsiella/Raoultella group</taxon>
        <taxon>Klebsiella</taxon>
        <taxon>Klebsiella pneumoniae complex</taxon>
    </lineage>
</organism>
<reference key="1">
    <citation type="journal article" date="2008" name="PLoS Genet.">
        <title>Complete genome sequence of the N2-fixing broad host range endophyte Klebsiella pneumoniae 342 and virulence predictions verified in mice.</title>
        <authorList>
            <person name="Fouts D.E."/>
            <person name="Tyler H.L."/>
            <person name="DeBoy R.T."/>
            <person name="Daugherty S."/>
            <person name="Ren Q."/>
            <person name="Badger J.H."/>
            <person name="Durkin A.S."/>
            <person name="Huot H."/>
            <person name="Shrivastava S."/>
            <person name="Kothari S."/>
            <person name="Dodson R.J."/>
            <person name="Mohamoud Y."/>
            <person name="Khouri H."/>
            <person name="Roesch L.F.W."/>
            <person name="Krogfelt K.A."/>
            <person name="Struve C."/>
            <person name="Triplett E.W."/>
            <person name="Methe B.A."/>
        </authorList>
    </citation>
    <scope>NUCLEOTIDE SEQUENCE [LARGE SCALE GENOMIC DNA]</scope>
    <source>
        <strain>342</strain>
    </source>
</reference>
<sequence>MKTLNRRDFPGAQYPDRIIQFGEGNFLRAFVDWQIDLLNEHTDLNAGIVVVRPIATDFPPSLSTQDGLYTTIIRGLNEQGEAVSDARLIRSVNREISAYADFDAFLRLAHNPEMRFVFSNTTEAGISYHAGDRFDDAPPVSYPAKLTRLLFERYQHFAGAADKGWVIIPCELIDYNGEALQALVLRYAAEWQLPQAFIRWLTSANTFCSTLVDRIVTGYPRDEVAALEAQTGYKDAFLDTAEHFYLFVIQGPASLAAELRLDKLPLNVRIVDDIKPYKERKVAILNGAHTALVPVAFLAGIDTVGEAMNDAEICAFVEKAIYDEIIPVLDLPRDELESFASAVTGRFRNPYIKHQLLSIALNGMTKYRTRILPQLLAGQQKSGQLPPRLTFALAALIAFYRGEREGERYPVQDDAEWLARYQTLWARHRDRQMSTRELVTAVLSVEAHWEQDLSQIPGLVEQVTADLDAILSRGMRDAVQPLC</sequence>
<dbReference type="EC" id="1.1.1.58" evidence="1"/>
<dbReference type="EMBL" id="CP000964">
    <property type="protein sequence ID" value="ACI08566.1"/>
    <property type="molecule type" value="Genomic_DNA"/>
</dbReference>
<dbReference type="SMR" id="B5XQU5"/>
<dbReference type="KEGG" id="kpe:KPK_2739"/>
<dbReference type="HOGENOM" id="CLU_027324_1_0_6"/>
<dbReference type="UniPathway" id="UPA00246"/>
<dbReference type="Proteomes" id="UP000001734">
    <property type="component" value="Chromosome"/>
</dbReference>
<dbReference type="GO" id="GO:0005829">
    <property type="term" value="C:cytosol"/>
    <property type="evidence" value="ECO:0007669"/>
    <property type="project" value="TreeGrafter"/>
</dbReference>
<dbReference type="GO" id="GO:0008926">
    <property type="term" value="F:mannitol-1-phosphate 5-dehydrogenase activity"/>
    <property type="evidence" value="ECO:0007669"/>
    <property type="project" value="TreeGrafter"/>
</dbReference>
<dbReference type="GO" id="GO:0009026">
    <property type="term" value="F:tagaturonate reductase activity"/>
    <property type="evidence" value="ECO:0007669"/>
    <property type="project" value="UniProtKB-UniRule"/>
</dbReference>
<dbReference type="GO" id="GO:0019698">
    <property type="term" value="P:D-galacturonate catabolic process"/>
    <property type="evidence" value="ECO:0007669"/>
    <property type="project" value="TreeGrafter"/>
</dbReference>
<dbReference type="GO" id="GO:0019592">
    <property type="term" value="P:mannitol catabolic process"/>
    <property type="evidence" value="ECO:0007669"/>
    <property type="project" value="TreeGrafter"/>
</dbReference>
<dbReference type="FunFam" id="1.10.1040.10:FF:000018">
    <property type="entry name" value="Altronate oxidoreductase"/>
    <property type="match status" value="1"/>
</dbReference>
<dbReference type="FunFam" id="3.40.50.720:FF:000153">
    <property type="entry name" value="Altronate oxidoreductase"/>
    <property type="match status" value="1"/>
</dbReference>
<dbReference type="Gene3D" id="1.10.1040.10">
    <property type="entry name" value="N-(1-d-carboxylethyl)-l-norvaline Dehydrogenase, domain 2"/>
    <property type="match status" value="1"/>
</dbReference>
<dbReference type="Gene3D" id="3.40.50.720">
    <property type="entry name" value="NAD(P)-binding Rossmann-like Domain"/>
    <property type="match status" value="1"/>
</dbReference>
<dbReference type="HAMAP" id="MF_00670">
    <property type="entry name" value="Altron_oxidoreduct"/>
    <property type="match status" value="1"/>
</dbReference>
<dbReference type="InterPro" id="IPR008927">
    <property type="entry name" value="6-PGluconate_DH-like_C_sf"/>
</dbReference>
<dbReference type="InterPro" id="IPR013328">
    <property type="entry name" value="6PGD_dom2"/>
</dbReference>
<dbReference type="InterPro" id="IPR023668">
    <property type="entry name" value="Altronate_OxRdtase"/>
</dbReference>
<dbReference type="InterPro" id="IPR013118">
    <property type="entry name" value="Mannitol_DH_C"/>
</dbReference>
<dbReference type="InterPro" id="IPR013131">
    <property type="entry name" value="Mannitol_DH_N"/>
</dbReference>
<dbReference type="InterPro" id="IPR036291">
    <property type="entry name" value="NAD(P)-bd_dom_sf"/>
</dbReference>
<dbReference type="NCBIfam" id="NF002969">
    <property type="entry name" value="PRK03643.1"/>
    <property type="match status" value="1"/>
</dbReference>
<dbReference type="PANTHER" id="PTHR30524:SF0">
    <property type="entry name" value="ALTRONATE OXIDOREDUCTASE-RELATED"/>
    <property type="match status" value="1"/>
</dbReference>
<dbReference type="PANTHER" id="PTHR30524">
    <property type="entry name" value="MANNITOL-1-PHOSPHATE 5-DEHYDROGENASE"/>
    <property type="match status" value="1"/>
</dbReference>
<dbReference type="Pfam" id="PF01232">
    <property type="entry name" value="Mannitol_dh"/>
    <property type="match status" value="1"/>
</dbReference>
<dbReference type="Pfam" id="PF08125">
    <property type="entry name" value="Mannitol_dh_C"/>
    <property type="match status" value="1"/>
</dbReference>
<dbReference type="SUPFAM" id="SSF48179">
    <property type="entry name" value="6-phosphogluconate dehydrogenase C-terminal domain-like"/>
    <property type="match status" value="1"/>
</dbReference>
<dbReference type="SUPFAM" id="SSF51735">
    <property type="entry name" value="NAD(P)-binding Rossmann-fold domains"/>
    <property type="match status" value="1"/>
</dbReference>
<keyword id="KW-0520">NAD</keyword>
<keyword id="KW-0560">Oxidoreductase</keyword>
<evidence type="ECO:0000255" key="1">
    <source>
        <dbReference type="HAMAP-Rule" id="MF_00670"/>
    </source>
</evidence>
<gene>
    <name evidence="1" type="primary">uxaB</name>
    <name type="ordered locus">KPK_2739</name>
</gene>
<protein>
    <recommendedName>
        <fullName evidence="1">Altronate oxidoreductase</fullName>
        <ecNumber evidence="1">1.1.1.58</ecNumber>
    </recommendedName>
    <alternativeName>
        <fullName evidence="1">Tagaturonate dehydrogenase</fullName>
    </alternativeName>
    <alternativeName>
        <fullName evidence="1">Tagaturonate reductase</fullName>
    </alternativeName>
</protein>
<accession>B5XQU5</accession>
<name>UXAB_KLEP3</name>